<keyword id="KW-1185">Reference proteome</keyword>
<keyword id="KW-0687">Ribonucleoprotein</keyword>
<keyword id="KW-0689">Ribosomal protein</keyword>
<organism>
    <name type="scientific">Stutzerimonas stutzeri (strain A1501)</name>
    <name type="common">Pseudomonas stutzeri</name>
    <dbReference type="NCBI Taxonomy" id="379731"/>
    <lineage>
        <taxon>Bacteria</taxon>
        <taxon>Pseudomonadati</taxon>
        <taxon>Pseudomonadota</taxon>
        <taxon>Gammaproteobacteria</taxon>
        <taxon>Pseudomonadales</taxon>
        <taxon>Pseudomonadaceae</taxon>
        <taxon>Stutzerimonas</taxon>
    </lineage>
</organism>
<sequence length="64" mass="7434">MPKMKTKSGAAKRFKKTANGFKHKHAFKSHILTKMTTKRKRQLRGCSQVHPSDVAKVERMLRVR</sequence>
<protein>
    <recommendedName>
        <fullName evidence="1">Large ribosomal subunit protein bL35</fullName>
    </recommendedName>
    <alternativeName>
        <fullName evidence="3">50S ribosomal protein L35</fullName>
    </alternativeName>
</protein>
<dbReference type="EMBL" id="CP000304">
    <property type="protein sequence ID" value="ABP80021.1"/>
    <property type="molecule type" value="Genomic_DNA"/>
</dbReference>
<dbReference type="RefSeq" id="WP_003298367.1">
    <property type="nucleotide sequence ID" value="NC_009434.1"/>
</dbReference>
<dbReference type="SMR" id="A4VM20"/>
<dbReference type="GeneID" id="75214851"/>
<dbReference type="KEGG" id="psa:PST_2367"/>
<dbReference type="eggNOG" id="COG0291">
    <property type="taxonomic scope" value="Bacteria"/>
</dbReference>
<dbReference type="HOGENOM" id="CLU_169643_1_1_6"/>
<dbReference type="Proteomes" id="UP000000233">
    <property type="component" value="Chromosome"/>
</dbReference>
<dbReference type="GO" id="GO:0022625">
    <property type="term" value="C:cytosolic large ribosomal subunit"/>
    <property type="evidence" value="ECO:0007669"/>
    <property type="project" value="TreeGrafter"/>
</dbReference>
<dbReference type="GO" id="GO:0003735">
    <property type="term" value="F:structural constituent of ribosome"/>
    <property type="evidence" value="ECO:0007669"/>
    <property type="project" value="InterPro"/>
</dbReference>
<dbReference type="GO" id="GO:0006412">
    <property type="term" value="P:translation"/>
    <property type="evidence" value="ECO:0007669"/>
    <property type="project" value="UniProtKB-UniRule"/>
</dbReference>
<dbReference type="FunFam" id="4.10.410.60:FF:000001">
    <property type="entry name" value="50S ribosomal protein L35"/>
    <property type="match status" value="1"/>
</dbReference>
<dbReference type="Gene3D" id="4.10.410.60">
    <property type="match status" value="1"/>
</dbReference>
<dbReference type="HAMAP" id="MF_00514">
    <property type="entry name" value="Ribosomal_bL35"/>
    <property type="match status" value="1"/>
</dbReference>
<dbReference type="InterPro" id="IPR001706">
    <property type="entry name" value="Ribosomal_bL35"/>
</dbReference>
<dbReference type="InterPro" id="IPR021137">
    <property type="entry name" value="Ribosomal_bL35-like"/>
</dbReference>
<dbReference type="InterPro" id="IPR018265">
    <property type="entry name" value="Ribosomal_bL35_CS"/>
</dbReference>
<dbReference type="InterPro" id="IPR037229">
    <property type="entry name" value="Ribosomal_bL35_sf"/>
</dbReference>
<dbReference type="NCBIfam" id="TIGR00001">
    <property type="entry name" value="rpmI_bact"/>
    <property type="match status" value="1"/>
</dbReference>
<dbReference type="PANTHER" id="PTHR33343">
    <property type="entry name" value="54S RIBOSOMAL PROTEIN BL35M"/>
    <property type="match status" value="1"/>
</dbReference>
<dbReference type="PANTHER" id="PTHR33343:SF1">
    <property type="entry name" value="LARGE RIBOSOMAL SUBUNIT PROTEIN BL35M"/>
    <property type="match status" value="1"/>
</dbReference>
<dbReference type="Pfam" id="PF01632">
    <property type="entry name" value="Ribosomal_L35p"/>
    <property type="match status" value="1"/>
</dbReference>
<dbReference type="PRINTS" id="PR00064">
    <property type="entry name" value="RIBOSOMALL35"/>
</dbReference>
<dbReference type="SUPFAM" id="SSF143034">
    <property type="entry name" value="L35p-like"/>
    <property type="match status" value="1"/>
</dbReference>
<dbReference type="PROSITE" id="PS00936">
    <property type="entry name" value="RIBOSOMAL_L35"/>
    <property type="match status" value="1"/>
</dbReference>
<feature type="chain" id="PRO_1000050749" description="Large ribosomal subunit protein bL35">
    <location>
        <begin position="1"/>
        <end position="64"/>
    </location>
</feature>
<feature type="region of interest" description="Disordered" evidence="2">
    <location>
        <begin position="1"/>
        <end position="23"/>
    </location>
</feature>
<reference key="1">
    <citation type="journal article" date="2008" name="Proc. Natl. Acad. Sci. U.S.A.">
        <title>Nitrogen fixation island and rhizosphere competence traits in the genome of root-associated Pseudomonas stutzeri A1501.</title>
        <authorList>
            <person name="Yan Y."/>
            <person name="Yang J."/>
            <person name="Dou Y."/>
            <person name="Chen M."/>
            <person name="Ping S."/>
            <person name="Peng J."/>
            <person name="Lu W."/>
            <person name="Zhang W."/>
            <person name="Yao Z."/>
            <person name="Li H."/>
            <person name="Liu W."/>
            <person name="He S."/>
            <person name="Geng L."/>
            <person name="Zhang X."/>
            <person name="Yang F."/>
            <person name="Yu H."/>
            <person name="Zhan Y."/>
            <person name="Li D."/>
            <person name="Lin Z."/>
            <person name="Wang Y."/>
            <person name="Elmerich C."/>
            <person name="Lin M."/>
            <person name="Jin Q."/>
        </authorList>
    </citation>
    <scope>NUCLEOTIDE SEQUENCE [LARGE SCALE GENOMIC DNA]</scope>
    <source>
        <strain>A1501</strain>
    </source>
</reference>
<comment type="similarity">
    <text evidence="1">Belongs to the bacterial ribosomal protein bL35 family.</text>
</comment>
<proteinExistence type="inferred from homology"/>
<gene>
    <name evidence="1" type="primary">rpmI</name>
    <name type="ordered locus">PST_2367</name>
</gene>
<name>RL35_STUS1</name>
<evidence type="ECO:0000255" key="1">
    <source>
        <dbReference type="HAMAP-Rule" id="MF_00514"/>
    </source>
</evidence>
<evidence type="ECO:0000256" key="2">
    <source>
        <dbReference type="SAM" id="MobiDB-lite"/>
    </source>
</evidence>
<evidence type="ECO:0000305" key="3"/>
<accession>A4VM20</accession>